<sequence length="894" mass="99831">MGLDVDSVPIAEAAAPSSMAATEPPADKIAQLDRDASNVAPMNTDSSRETMPTSPRALEPAQVTPLSSDVAYEGLVQGKDPSDDSIIAATPLQRTFSTVAPTMTTQPNRLQLIDEDQQFHGAEFNDHLKQWGLSDAGFGYDICAVLGSQSTGKSTLLNRLFGTNFDVMDERARQQTTKGIWLCRGMDRNVLVMDVEGTDGRERGEDQDFERKSALFSLATAECLIVNMWENQVGLFQGANMALLKTVLDVNLSLFQAGRARAGSAKEKTLLLFVIRDFIGTTPLANLEATIRTDLQRIWASLTKPESLVHAELGDFFDLGFATLPHKVLQAKEFDADILKLQRRFIDRGDESYVFKTEYHKRIPIDGLPHYLEGVWEQIVQNKDLDLPTQQELLAQFRCDEIATTASLAFSSAMSALRAELDAGHVLESLGNDMARHRSEALAMFDKDASRYHQVVYARKREDLLVKLNAALLPFFLCQLKNLHNELTDQCKRVIQEGTKQPAYNFGLLVEEGITKAMRAFDDETARLVLPETDWKVDDERAQLLDELHTLARTLRANETRKLSIQLEKDMRRELADPVELALSQPDISMWNNVLSAFHRVNEQVANMYRTRAASLNTTPDEDTTAVAQLQQASWRLLLEKVHEQTSETVLASRLRGYFEDRFRYDAGGVPRVWKPSDDIDDIFVKSRDATLALIPLYATIQPDDPSLQMSVVSLVGAPEESLETPSYDEARHVLSERKCAEIGQRFRREADAAYIEAKRGTVSSMSQVPIWMYGVLVVLGWNEAMAVLRNPVYFTLLCMVLATAYVIWRLNLGTPVLALASGMTRELRAFGEEQLRTYLDGTPPSANRAREYRVPSGSTAHVSEKTPHRPLTTSGAAEADTVEDSHPRLPASF</sequence>
<proteinExistence type="inferred from homology"/>
<dbReference type="EC" id="3.6.5.-" evidence="1"/>
<dbReference type="EMBL" id="AAYY01000015">
    <property type="protein sequence ID" value="EDP41791.1"/>
    <property type="molecule type" value="Genomic_DNA"/>
</dbReference>
<dbReference type="RefSeq" id="XP_001729005.1">
    <property type="nucleotide sequence ID" value="XM_001728953.1"/>
</dbReference>
<dbReference type="SMR" id="A8QAN4"/>
<dbReference type="FunCoup" id="A8QAN4">
    <property type="interactions" value="111"/>
</dbReference>
<dbReference type="STRING" id="425265.A8QAN4"/>
<dbReference type="GeneID" id="5853312"/>
<dbReference type="KEGG" id="mgl:MGL_3793"/>
<dbReference type="VEuPathDB" id="FungiDB:MGL_3793"/>
<dbReference type="InParanoid" id="A8QAN4"/>
<dbReference type="OMA" id="PIIKMTE"/>
<dbReference type="OrthoDB" id="1597724at2759"/>
<dbReference type="Proteomes" id="UP000008837">
    <property type="component" value="Unassembled WGS sequence"/>
</dbReference>
<dbReference type="GO" id="GO:0005789">
    <property type="term" value="C:endoplasmic reticulum membrane"/>
    <property type="evidence" value="ECO:0007669"/>
    <property type="project" value="UniProtKB-SubCell"/>
</dbReference>
<dbReference type="GO" id="GO:0005525">
    <property type="term" value="F:GTP binding"/>
    <property type="evidence" value="ECO:0007669"/>
    <property type="project" value="UniProtKB-UniRule"/>
</dbReference>
<dbReference type="GO" id="GO:0003924">
    <property type="term" value="F:GTPase activity"/>
    <property type="evidence" value="ECO:0007669"/>
    <property type="project" value="UniProtKB-UniRule"/>
</dbReference>
<dbReference type="GO" id="GO:0016320">
    <property type="term" value="P:endoplasmic reticulum membrane fusion"/>
    <property type="evidence" value="ECO:0007669"/>
    <property type="project" value="TreeGrafter"/>
</dbReference>
<dbReference type="CDD" id="cd01851">
    <property type="entry name" value="GBP"/>
    <property type="match status" value="1"/>
</dbReference>
<dbReference type="FunFam" id="3.40.50.300:FF:000727">
    <property type="entry name" value="Protein SEY1 homolog"/>
    <property type="match status" value="1"/>
</dbReference>
<dbReference type="Gene3D" id="3.40.50.300">
    <property type="entry name" value="P-loop containing nucleotide triphosphate hydrolases"/>
    <property type="match status" value="1"/>
</dbReference>
<dbReference type="HAMAP" id="MF_03109">
    <property type="entry name" value="Sey1"/>
    <property type="match status" value="1"/>
</dbReference>
<dbReference type="InterPro" id="IPR030386">
    <property type="entry name" value="G_GB1_RHD3_dom"/>
</dbReference>
<dbReference type="InterPro" id="IPR027417">
    <property type="entry name" value="P-loop_NTPase"/>
</dbReference>
<dbReference type="InterPro" id="IPR008803">
    <property type="entry name" value="RHD3/Sey1"/>
</dbReference>
<dbReference type="InterPro" id="IPR046758">
    <property type="entry name" value="Sey1/RHD3-like_3HB"/>
</dbReference>
<dbReference type="PANTHER" id="PTHR45923">
    <property type="entry name" value="PROTEIN SEY1"/>
    <property type="match status" value="1"/>
</dbReference>
<dbReference type="PANTHER" id="PTHR45923:SF2">
    <property type="entry name" value="PROTEIN SEY1"/>
    <property type="match status" value="1"/>
</dbReference>
<dbReference type="Pfam" id="PF05879">
    <property type="entry name" value="RHD3_GTPase"/>
    <property type="match status" value="1"/>
</dbReference>
<dbReference type="Pfam" id="PF20428">
    <property type="entry name" value="Sey1_3HB"/>
    <property type="match status" value="1"/>
</dbReference>
<dbReference type="SUPFAM" id="SSF52540">
    <property type="entry name" value="P-loop containing nucleoside triphosphate hydrolases"/>
    <property type="match status" value="1"/>
</dbReference>
<dbReference type="PROSITE" id="PS51715">
    <property type="entry name" value="G_GB1_RHD3"/>
    <property type="match status" value="1"/>
</dbReference>
<gene>
    <name evidence="1" type="primary">SEY1</name>
    <name type="ORF">MGL_3793</name>
</gene>
<protein>
    <recommendedName>
        <fullName evidence="1">Protein SEY1</fullName>
        <ecNumber evidence="1">3.6.5.-</ecNumber>
    </recommendedName>
</protein>
<evidence type="ECO:0000255" key="1">
    <source>
        <dbReference type="HAMAP-Rule" id="MF_03109"/>
    </source>
</evidence>
<evidence type="ECO:0000255" key="2">
    <source>
        <dbReference type="PROSITE-ProRule" id="PRU01052"/>
    </source>
</evidence>
<evidence type="ECO:0000256" key="3">
    <source>
        <dbReference type="SAM" id="MobiDB-lite"/>
    </source>
</evidence>
<keyword id="KW-0175">Coiled coil</keyword>
<keyword id="KW-0256">Endoplasmic reticulum</keyword>
<keyword id="KW-0342">GTP-binding</keyword>
<keyword id="KW-0378">Hydrolase</keyword>
<keyword id="KW-0472">Membrane</keyword>
<keyword id="KW-0547">Nucleotide-binding</keyword>
<keyword id="KW-1185">Reference proteome</keyword>
<keyword id="KW-0812">Transmembrane</keyword>
<keyword id="KW-1133">Transmembrane helix</keyword>
<reference key="1">
    <citation type="journal article" date="2007" name="Proc. Natl. Acad. Sci. U.S.A.">
        <title>Dandruff-associated Malassezia genomes reveal convergent and divergent virulence traits shared with plant and human fungal pathogens.</title>
        <authorList>
            <person name="Xu J."/>
            <person name="Saunders C.W."/>
            <person name="Hu P."/>
            <person name="Grant R.A."/>
            <person name="Boekhout T."/>
            <person name="Kuramae E.E."/>
            <person name="Kronstad J.W."/>
            <person name="DeAngelis Y.M."/>
            <person name="Reeder N.L."/>
            <person name="Johnstone K.R."/>
            <person name="Leland M."/>
            <person name="Fieno A.M."/>
            <person name="Begley W.M."/>
            <person name="Sun Y."/>
            <person name="Lacey M.P."/>
            <person name="Chaudhary T."/>
            <person name="Keough T."/>
            <person name="Chu L."/>
            <person name="Sears R."/>
            <person name="Yuan B."/>
            <person name="Dawson T.L. Jr."/>
        </authorList>
    </citation>
    <scope>NUCLEOTIDE SEQUENCE [LARGE SCALE GENOMIC DNA]</scope>
    <source>
        <strain>ATCC MYA-4612 / CBS 7966</strain>
    </source>
</reference>
<feature type="chain" id="PRO_0000384986" description="Protein SEY1">
    <location>
        <begin position="1"/>
        <end position="894"/>
    </location>
</feature>
<feature type="topological domain" description="Cytoplasmic" evidence="1">
    <location>
        <begin position="1"/>
        <end position="768"/>
    </location>
</feature>
<feature type="transmembrane region" description="Helical" evidence="1">
    <location>
        <begin position="769"/>
        <end position="789"/>
    </location>
</feature>
<feature type="topological domain" description="Lumenal" evidence="1">
    <location>
        <begin position="790"/>
        <end position="792"/>
    </location>
</feature>
<feature type="transmembrane region" description="Helical" evidence="1">
    <location>
        <begin position="793"/>
        <end position="813"/>
    </location>
</feature>
<feature type="topological domain" description="Cytoplasmic" evidence="1">
    <location>
        <begin position="814"/>
        <end position="894"/>
    </location>
</feature>
<feature type="domain" description="GB1/RHD3-type G" evidence="2">
    <location>
        <begin position="137"/>
        <end position="359"/>
    </location>
</feature>
<feature type="region of interest" description="Disordered" evidence="3">
    <location>
        <begin position="1"/>
        <end position="64"/>
    </location>
</feature>
<feature type="region of interest" description="Disordered" evidence="3">
    <location>
        <begin position="841"/>
        <end position="894"/>
    </location>
</feature>
<feature type="coiled-coil region" evidence="1">
    <location>
        <begin position="536"/>
        <end position="559"/>
    </location>
</feature>
<feature type="compositionally biased region" description="Low complexity" evidence="3">
    <location>
        <begin position="9"/>
        <end position="24"/>
    </location>
</feature>
<feature type="compositionally biased region" description="Polar residues" evidence="3">
    <location>
        <begin position="40"/>
        <end position="53"/>
    </location>
</feature>
<feature type="binding site" evidence="1">
    <location>
        <begin position="147"/>
        <end position="154"/>
    </location>
    <ligand>
        <name>GTP</name>
        <dbReference type="ChEBI" id="CHEBI:37565"/>
    </ligand>
</feature>
<accession>A8QAN4</accession>
<comment type="function">
    <text evidence="1">Cooperates with the reticulon proteins and tubule-shaping DP1 family proteins to generate and maintain the structure of the tubular endoplasmic reticulum network. Has GTPase activity, which is required for its function in ER organization.</text>
</comment>
<comment type="subcellular location">
    <subcellularLocation>
        <location evidence="1">Endoplasmic reticulum membrane</location>
        <topology evidence="1">Multi-pass membrane protein</topology>
    </subcellularLocation>
    <text evidence="1">Enriched in the cortical ER. Concentrated in punctae along the ER tubules.</text>
</comment>
<comment type="similarity">
    <text evidence="2">Belongs to the TRAFAC class dynamin-like GTPase superfamily. GB1/RHD3 GTPase family. RHD3 subfamily.</text>
</comment>
<organism>
    <name type="scientific">Malassezia globosa (strain ATCC MYA-4612 / CBS 7966)</name>
    <name type="common">Dandruff-associated fungus</name>
    <dbReference type="NCBI Taxonomy" id="425265"/>
    <lineage>
        <taxon>Eukaryota</taxon>
        <taxon>Fungi</taxon>
        <taxon>Dikarya</taxon>
        <taxon>Basidiomycota</taxon>
        <taxon>Ustilaginomycotina</taxon>
        <taxon>Malasseziomycetes</taxon>
        <taxon>Malasseziales</taxon>
        <taxon>Malasseziaceae</taxon>
        <taxon>Malassezia</taxon>
    </lineage>
</organism>
<name>SEY1_MALGO</name>